<gene>
    <name evidence="1" type="primary">accD</name>
    <name type="ordered locus">xcc-b100_1622</name>
</gene>
<sequence>MSWLSKLMPSGIRTENTPAKKRSVPEGLWEKCSNCGSALYGPELEENLEVCPKCDHHMAIRARARLAALFDVDSPPTEIAAQLGPVDVLKFKDQKKYGERIKASQKSSGEYDALIAMRGMLKGNPLVAAAFDFAFMGGSMGSVVGERFARAAEVALEVGCPFVCFSASGGARMQEGLFSLMQMAKTSAALGRLREAGLPYISVLTHPTTGGVSASFAMLGDINIAEPHALIGFAGPRVIEQTVRETLPEGFQRSEFLLDHGAIDQICDRRDMRDRIAELTTMMMRQPHPQDADAA</sequence>
<protein>
    <recommendedName>
        <fullName evidence="1">Acetyl-coenzyme A carboxylase carboxyl transferase subunit beta</fullName>
        <shortName evidence="1">ACCase subunit beta</shortName>
        <shortName evidence="1">Acetyl-CoA carboxylase carboxyltransferase subunit beta</shortName>
        <ecNumber evidence="1">2.1.3.15</ecNumber>
    </recommendedName>
</protein>
<keyword id="KW-0067">ATP-binding</keyword>
<keyword id="KW-0963">Cytoplasm</keyword>
<keyword id="KW-0275">Fatty acid biosynthesis</keyword>
<keyword id="KW-0276">Fatty acid metabolism</keyword>
<keyword id="KW-0444">Lipid biosynthesis</keyword>
<keyword id="KW-0443">Lipid metabolism</keyword>
<keyword id="KW-0479">Metal-binding</keyword>
<keyword id="KW-0547">Nucleotide-binding</keyword>
<keyword id="KW-0808">Transferase</keyword>
<keyword id="KW-0862">Zinc</keyword>
<keyword id="KW-0863">Zinc-finger</keyword>
<reference key="1">
    <citation type="journal article" date="2008" name="J. Biotechnol.">
        <title>The genome of Xanthomonas campestris pv. campestris B100 and its use for the reconstruction of metabolic pathways involved in xanthan biosynthesis.</title>
        <authorList>
            <person name="Vorhoelter F.-J."/>
            <person name="Schneiker S."/>
            <person name="Goesmann A."/>
            <person name="Krause L."/>
            <person name="Bekel T."/>
            <person name="Kaiser O."/>
            <person name="Linke B."/>
            <person name="Patschkowski T."/>
            <person name="Rueckert C."/>
            <person name="Schmid J."/>
            <person name="Sidhu V.K."/>
            <person name="Sieber V."/>
            <person name="Tauch A."/>
            <person name="Watt S.A."/>
            <person name="Weisshaar B."/>
            <person name="Becker A."/>
            <person name="Niehaus K."/>
            <person name="Puehler A."/>
        </authorList>
    </citation>
    <scope>NUCLEOTIDE SEQUENCE [LARGE SCALE GENOMIC DNA]</scope>
    <source>
        <strain>B100</strain>
    </source>
</reference>
<accession>B0RR87</accession>
<feature type="chain" id="PRO_0000359098" description="Acetyl-coenzyme A carboxylase carboxyl transferase subunit beta">
    <location>
        <begin position="1"/>
        <end position="295"/>
    </location>
</feature>
<feature type="domain" description="CoA carboxyltransferase N-terminal" evidence="2">
    <location>
        <begin position="28"/>
        <end position="295"/>
    </location>
</feature>
<feature type="zinc finger region" description="C4-type" evidence="1">
    <location>
        <begin position="32"/>
        <end position="54"/>
    </location>
</feature>
<feature type="region of interest" description="Disordered" evidence="3">
    <location>
        <begin position="1"/>
        <end position="20"/>
    </location>
</feature>
<feature type="binding site" evidence="1">
    <location>
        <position position="32"/>
    </location>
    <ligand>
        <name>Zn(2+)</name>
        <dbReference type="ChEBI" id="CHEBI:29105"/>
    </ligand>
</feature>
<feature type="binding site" evidence="1">
    <location>
        <position position="35"/>
    </location>
    <ligand>
        <name>Zn(2+)</name>
        <dbReference type="ChEBI" id="CHEBI:29105"/>
    </ligand>
</feature>
<feature type="binding site" evidence="1">
    <location>
        <position position="51"/>
    </location>
    <ligand>
        <name>Zn(2+)</name>
        <dbReference type="ChEBI" id="CHEBI:29105"/>
    </ligand>
</feature>
<feature type="binding site" evidence="1">
    <location>
        <position position="54"/>
    </location>
    <ligand>
        <name>Zn(2+)</name>
        <dbReference type="ChEBI" id="CHEBI:29105"/>
    </ligand>
</feature>
<comment type="function">
    <text evidence="1">Component of the acetyl coenzyme A carboxylase (ACC) complex. Biotin carboxylase (BC) catalyzes the carboxylation of biotin on its carrier protein (BCCP) and then the CO(2) group is transferred by the transcarboxylase to acetyl-CoA to form malonyl-CoA.</text>
</comment>
<comment type="catalytic activity">
    <reaction evidence="1">
        <text>N(6)-carboxybiotinyl-L-lysyl-[protein] + acetyl-CoA = N(6)-biotinyl-L-lysyl-[protein] + malonyl-CoA</text>
        <dbReference type="Rhea" id="RHEA:54728"/>
        <dbReference type="Rhea" id="RHEA-COMP:10505"/>
        <dbReference type="Rhea" id="RHEA-COMP:10506"/>
        <dbReference type="ChEBI" id="CHEBI:57288"/>
        <dbReference type="ChEBI" id="CHEBI:57384"/>
        <dbReference type="ChEBI" id="CHEBI:83144"/>
        <dbReference type="ChEBI" id="CHEBI:83145"/>
        <dbReference type="EC" id="2.1.3.15"/>
    </reaction>
</comment>
<comment type="cofactor">
    <cofactor evidence="1">
        <name>Zn(2+)</name>
        <dbReference type="ChEBI" id="CHEBI:29105"/>
    </cofactor>
    <text evidence="1">Binds 1 zinc ion per subunit.</text>
</comment>
<comment type="pathway">
    <text evidence="1">Lipid metabolism; malonyl-CoA biosynthesis; malonyl-CoA from acetyl-CoA: step 1/1.</text>
</comment>
<comment type="subunit">
    <text evidence="1">Acetyl-CoA carboxylase is a heterohexamer composed of biotin carboxyl carrier protein (AccB), biotin carboxylase (AccC) and two subunits each of ACCase subunit alpha (AccA) and ACCase subunit beta (AccD).</text>
</comment>
<comment type="subcellular location">
    <subcellularLocation>
        <location evidence="1">Cytoplasm</location>
    </subcellularLocation>
</comment>
<comment type="similarity">
    <text evidence="1">Belongs to the AccD/PCCB family.</text>
</comment>
<dbReference type="EC" id="2.1.3.15" evidence="1"/>
<dbReference type="EMBL" id="AM920689">
    <property type="protein sequence ID" value="CAP50972.1"/>
    <property type="molecule type" value="Genomic_DNA"/>
</dbReference>
<dbReference type="SMR" id="B0RR87"/>
<dbReference type="KEGG" id="xca:xcc-b100_1622"/>
<dbReference type="HOGENOM" id="CLU_015486_1_0_6"/>
<dbReference type="UniPathway" id="UPA00655">
    <property type="reaction ID" value="UER00711"/>
</dbReference>
<dbReference type="Proteomes" id="UP000001188">
    <property type="component" value="Chromosome"/>
</dbReference>
<dbReference type="GO" id="GO:0009329">
    <property type="term" value="C:acetate CoA-transferase complex"/>
    <property type="evidence" value="ECO:0007669"/>
    <property type="project" value="TreeGrafter"/>
</dbReference>
<dbReference type="GO" id="GO:0003989">
    <property type="term" value="F:acetyl-CoA carboxylase activity"/>
    <property type="evidence" value="ECO:0007669"/>
    <property type="project" value="InterPro"/>
</dbReference>
<dbReference type="GO" id="GO:0005524">
    <property type="term" value="F:ATP binding"/>
    <property type="evidence" value="ECO:0007669"/>
    <property type="project" value="UniProtKB-KW"/>
</dbReference>
<dbReference type="GO" id="GO:0016743">
    <property type="term" value="F:carboxyl- or carbamoyltransferase activity"/>
    <property type="evidence" value="ECO:0007669"/>
    <property type="project" value="UniProtKB-UniRule"/>
</dbReference>
<dbReference type="GO" id="GO:0008270">
    <property type="term" value="F:zinc ion binding"/>
    <property type="evidence" value="ECO:0007669"/>
    <property type="project" value="UniProtKB-UniRule"/>
</dbReference>
<dbReference type="GO" id="GO:0006633">
    <property type="term" value="P:fatty acid biosynthetic process"/>
    <property type="evidence" value="ECO:0007669"/>
    <property type="project" value="UniProtKB-KW"/>
</dbReference>
<dbReference type="GO" id="GO:2001295">
    <property type="term" value="P:malonyl-CoA biosynthetic process"/>
    <property type="evidence" value="ECO:0007669"/>
    <property type="project" value="UniProtKB-UniRule"/>
</dbReference>
<dbReference type="Gene3D" id="3.90.226.10">
    <property type="entry name" value="2-enoyl-CoA Hydratase, Chain A, domain 1"/>
    <property type="match status" value="1"/>
</dbReference>
<dbReference type="HAMAP" id="MF_01395">
    <property type="entry name" value="AcetylCoA_CT_beta"/>
    <property type="match status" value="1"/>
</dbReference>
<dbReference type="InterPro" id="IPR034733">
    <property type="entry name" value="AcCoA_carboxyl_beta"/>
</dbReference>
<dbReference type="InterPro" id="IPR000438">
    <property type="entry name" value="Acetyl_CoA_COase_Trfase_b_su"/>
</dbReference>
<dbReference type="InterPro" id="IPR029045">
    <property type="entry name" value="ClpP/crotonase-like_dom_sf"/>
</dbReference>
<dbReference type="InterPro" id="IPR011762">
    <property type="entry name" value="COA_CT_N"/>
</dbReference>
<dbReference type="InterPro" id="IPR041010">
    <property type="entry name" value="Znf-ACC"/>
</dbReference>
<dbReference type="NCBIfam" id="TIGR00515">
    <property type="entry name" value="accD"/>
    <property type="match status" value="1"/>
</dbReference>
<dbReference type="PANTHER" id="PTHR42995">
    <property type="entry name" value="ACETYL-COENZYME A CARBOXYLASE CARBOXYL TRANSFERASE SUBUNIT BETA, CHLOROPLASTIC"/>
    <property type="match status" value="1"/>
</dbReference>
<dbReference type="PANTHER" id="PTHR42995:SF5">
    <property type="entry name" value="ACETYL-COENZYME A CARBOXYLASE CARBOXYL TRANSFERASE SUBUNIT BETA, CHLOROPLASTIC"/>
    <property type="match status" value="1"/>
</dbReference>
<dbReference type="Pfam" id="PF01039">
    <property type="entry name" value="Carboxyl_trans"/>
    <property type="match status" value="1"/>
</dbReference>
<dbReference type="Pfam" id="PF17848">
    <property type="entry name" value="Zn_ribbon_ACC"/>
    <property type="match status" value="1"/>
</dbReference>
<dbReference type="PRINTS" id="PR01070">
    <property type="entry name" value="ACCCTRFRASEB"/>
</dbReference>
<dbReference type="SUPFAM" id="SSF52096">
    <property type="entry name" value="ClpP/crotonase"/>
    <property type="match status" value="1"/>
</dbReference>
<dbReference type="PROSITE" id="PS50980">
    <property type="entry name" value="COA_CT_NTER"/>
    <property type="match status" value="1"/>
</dbReference>
<evidence type="ECO:0000255" key="1">
    <source>
        <dbReference type="HAMAP-Rule" id="MF_01395"/>
    </source>
</evidence>
<evidence type="ECO:0000255" key="2">
    <source>
        <dbReference type="PROSITE-ProRule" id="PRU01136"/>
    </source>
</evidence>
<evidence type="ECO:0000256" key="3">
    <source>
        <dbReference type="SAM" id="MobiDB-lite"/>
    </source>
</evidence>
<proteinExistence type="inferred from homology"/>
<name>ACCD_XANCB</name>
<organism>
    <name type="scientific">Xanthomonas campestris pv. campestris (strain B100)</name>
    <dbReference type="NCBI Taxonomy" id="509169"/>
    <lineage>
        <taxon>Bacteria</taxon>
        <taxon>Pseudomonadati</taxon>
        <taxon>Pseudomonadota</taxon>
        <taxon>Gammaproteobacteria</taxon>
        <taxon>Lysobacterales</taxon>
        <taxon>Lysobacteraceae</taxon>
        <taxon>Xanthomonas</taxon>
    </lineage>
</organism>